<comment type="function">
    <text evidence="1">Probable membrane-associated metalloprotease that may be involved in chloroplast development.</text>
</comment>
<comment type="subcellular location">
    <subcellularLocation>
        <location evidence="4">Plastid</location>
        <location evidence="4">Chloroplast membrane</location>
        <topology evidence="4">Multi-pass membrane protein</topology>
    </subcellularLocation>
</comment>
<comment type="similarity">
    <text evidence="4">Belongs to the peptidase M50B family.</text>
</comment>
<keyword id="KW-0150">Chloroplast</keyword>
<keyword id="KW-0378">Hydrolase</keyword>
<keyword id="KW-0472">Membrane</keyword>
<keyword id="KW-0482">Metalloprotease</keyword>
<keyword id="KW-0934">Plastid</keyword>
<keyword id="KW-0645">Protease</keyword>
<keyword id="KW-1185">Reference proteome</keyword>
<keyword id="KW-0809">Transit peptide</keyword>
<keyword id="KW-0812">Transmembrane</keyword>
<keyword id="KW-1133">Transmembrane helix</keyword>
<feature type="transit peptide" description="Chloroplast" evidence="2">
    <location>
        <begin position="1"/>
        <end position="63"/>
    </location>
</feature>
<feature type="chain" id="PRO_0000428649" description="Probable zinc metalloprotease EGY2, chloroplastic">
    <location>
        <begin position="64"/>
        <end position="545"/>
    </location>
</feature>
<feature type="transmembrane region" description="Helical" evidence="2">
    <location>
        <begin position="256"/>
        <end position="276"/>
    </location>
</feature>
<feature type="transmembrane region" description="Helical" evidence="2">
    <location>
        <begin position="300"/>
        <end position="320"/>
    </location>
</feature>
<feature type="transmembrane region" description="Helical" evidence="2">
    <location>
        <begin position="325"/>
        <end position="345"/>
    </location>
</feature>
<feature type="transmembrane region" description="Helical" evidence="2">
    <location>
        <begin position="363"/>
        <end position="383"/>
    </location>
</feature>
<feature type="transmembrane region" description="Helical" evidence="2">
    <location>
        <begin position="426"/>
        <end position="446"/>
    </location>
</feature>
<feature type="transmembrane region" description="Helical" evidence="2">
    <location>
        <begin position="473"/>
        <end position="493"/>
    </location>
</feature>
<feature type="transmembrane region" description="Helical" evidence="2">
    <location>
        <begin position="513"/>
        <end position="533"/>
    </location>
</feature>
<feature type="region of interest" description="Disordered" evidence="3">
    <location>
        <begin position="66"/>
        <end position="142"/>
    </location>
</feature>
<feature type="compositionally biased region" description="Acidic residues" evidence="3">
    <location>
        <begin position="68"/>
        <end position="85"/>
    </location>
</feature>
<feature type="compositionally biased region" description="Polar residues" evidence="3">
    <location>
        <begin position="88"/>
        <end position="109"/>
    </location>
</feature>
<feature type="compositionally biased region" description="Polar residues" evidence="3">
    <location>
        <begin position="117"/>
        <end position="129"/>
    </location>
</feature>
<proteinExistence type="inferred from homology"/>
<reference key="1">
    <citation type="journal article" date="2005" name="PLoS Biol.">
        <title>The genomes of Oryza sativa: a history of duplications.</title>
        <authorList>
            <person name="Yu J."/>
            <person name="Wang J."/>
            <person name="Lin W."/>
            <person name="Li S."/>
            <person name="Li H."/>
            <person name="Zhou J."/>
            <person name="Ni P."/>
            <person name="Dong W."/>
            <person name="Hu S."/>
            <person name="Zeng C."/>
            <person name="Zhang J."/>
            <person name="Zhang Y."/>
            <person name="Li R."/>
            <person name="Xu Z."/>
            <person name="Li S."/>
            <person name="Li X."/>
            <person name="Zheng H."/>
            <person name="Cong L."/>
            <person name="Lin L."/>
            <person name="Yin J."/>
            <person name="Geng J."/>
            <person name="Li G."/>
            <person name="Shi J."/>
            <person name="Liu J."/>
            <person name="Lv H."/>
            <person name="Li J."/>
            <person name="Wang J."/>
            <person name="Deng Y."/>
            <person name="Ran L."/>
            <person name="Shi X."/>
            <person name="Wang X."/>
            <person name="Wu Q."/>
            <person name="Li C."/>
            <person name="Ren X."/>
            <person name="Wang J."/>
            <person name="Wang X."/>
            <person name="Li D."/>
            <person name="Liu D."/>
            <person name="Zhang X."/>
            <person name="Ji Z."/>
            <person name="Zhao W."/>
            <person name="Sun Y."/>
            <person name="Zhang Z."/>
            <person name="Bao J."/>
            <person name="Han Y."/>
            <person name="Dong L."/>
            <person name="Ji J."/>
            <person name="Chen P."/>
            <person name="Wu S."/>
            <person name="Liu J."/>
            <person name="Xiao Y."/>
            <person name="Bu D."/>
            <person name="Tan J."/>
            <person name="Yang L."/>
            <person name="Ye C."/>
            <person name="Zhang J."/>
            <person name="Xu J."/>
            <person name="Zhou Y."/>
            <person name="Yu Y."/>
            <person name="Zhang B."/>
            <person name="Zhuang S."/>
            <person name="Wei H."/>
            <person name="Liu B."/>
            <person name="Lei M."/>
            <person name="Yu H."/>
            <person name="Li Y."/>
            <person name="Xu H."/>
            <person name="Wei S."/>
            <person name="He X."/>
            <person name="Fang L."/>
            <person name="Zhang Z."/>
            <person name="Zhang Y."/>
            <person name="Huang X."/>
            <person name="Su Z."/>
            <person name="Tong W."/>
            <person name="Li J."/>
            <person name="Tong Z."/>
            <person name="Li S."/>
            <person name="Ye J."/>
            <person name="Wang L."/>
            <person name="Fang L."/>
            <person name="Lei T."/>
            <person name="Chen C.-S."/>
            <person name="Chen H.-C."/>
            <person name="Xu Z."/>
            <person name="Li H."/>
            <person name="Huang H."/>
            <person name="Zhang F."/>
            <person name="Xu H."/>
            <person name="Li N."/>
            <person name="Zhao C."/>
            <person name="Li S."/>
            <person name="Dong L."/>
            <person name="Huang Y."/>
            <person name="Li L."/>
            <person name="Xi Y."/>
            <person name="Qi Q."/>
            <person name="Li W."/>
            <person name="Zhang B."/>
            <person name="Hu W."/>
            <person name="Zhang Y."/>
            <person name="Tian X."/>
            <person name="Jiao Y."/>
            <person name="Liang X."/>
            <person name="Jin J."/>
            <person name="Gao L."/>
            <person name="Zheng W."/>
            <person name="Hao B."/>
            <person name="Liu S.-M."/>
            <person name="Wang W."/>
            <person name="Yuan L."/>
            <person name="Cao M."/>
            <person name="McDermott J."/>
            <person name="Samudrala R."/>
            <person name="Wang J."/>
            <person name="Wong G.K.-S."/>
            <person name="Yang H."/>
        </authorList>
    </citation>
    <scope>NUCLEOTIDE SEQUENCE [LARGE SCALE GENOMIC DNA]</scope>
    <source>
        <strain>cv. 93-11</strain>
    </source>
</reference>
<protein>
    <recommendedName>
        <fullName>Probable zinc metalloprotease EGY2, chloroplastic</fullName>
        <ecNumber>3.4.24.-</ecNumber>
    </recommendedName>
    <alternativeName>
        <fullName>Protein ETHYLENE-DEPENDENT GRAVITROPISM-DEFICIENT AND YELLOW-GREEN 2</fullName>
    </alternativeName>
</protein>
<organism>
    <name type="scientific">Oryza sativa subsp. indica</name>
    <name type="common">Rice</name>
    <dbReference type="NCBI Taxonomy" id="39946"/>
    <lineage>
        <taxon>Eukaryota</taxon>
        <taxon>Viridiplantae</taxon>
        <taxon>Streptophyta</taxon>
        <taxon>Embryophyta</taxon>
        <taxon>Tracheophyta</taxon>
        <taxon>Spermatophyta</taxon>
        <taxon>Magnoliopsida</taxon>
        <taxon>Liliopsida</taxon>
        <taxon>Poales</taxon>
        <taxon>Poaceae</taxon>
        <taxon>BOP clade</taxon>
        <taxon>Oryzoideae</taxon>
        <taxon>Oryzeae</taxon>
        <taxon>Oryzinae</taxon>
        <taxon>Oryza</taxon>
        <taxon>Oryza sativa</taxon>
    </lineage>
</organism>
<accession>B8AD72</accession>
<evidence type="ECO:0000250" key="1"/>
<evidence type="ECO:0000255" key="2"/>
<evidence type="ECO:0000256" key="3">
    <source>
        <dbReference type="SAM" id="MobiDB-lite"/>
    </source>
</evidence>
<evidence type="ECO:0000305" key="4"/>
<gene>
    <name type="primary">EGY2</name>
    <name type="ORF">OsI_00340</name>
</gene>
<name>EGY2_ORYSI</name>
<dbReference type="EC" id="3.4.24.-"/>
<dbReference type="EMBL" id="CM000126">
    <property type="protein sequence ID" value="EEC69919.1"/>
    <property type="molecule type" value="Genomic_DNA"/>
</dbReference>
<dbReference type="STRING" id="39946.B8AD72"/>
<dbReference type="EnsemblPlants" id="BGIOSGA002422-TA">
    <property type="protein sequence ID" value="BGIOSGA002422-PA"/>
    <property type="gene ID" value="BGIOSGA002422"/>
</dbReference>
<dbReference type="EnsemblPlants" id="OsGoSa_01g0002910.01">
    <property type="protein sequence ID" value="OsGoSa_01g0002910.01"/>
    <property type="gene ID" value="OsGoSa_01g0002910"/>
</dbReference>
<dbReference type="EnsemblPlants" id="OsIR64_01g0002810.02">
    <property type="protein sequence ID" value="OsIR64_01g0002810.02"/>
    <property type="gene ID" value="OsIR64_01g0002810"/>
</dbReference>
<dbReference type="EnsemblPlants" id="OsKYG_01g0002880.01">
    <property type="protein sequence ID" value="OsKYG_01g0002880.01"/>
    <property type="gene ID" value="OsKYG_01g0002880"/>
</dbReference>
<dbReference type="EnsemblPlants" id="OsLiXu_01g0002960.02">
    <property type="protein sequence ID" value="OsLiXu_01g0002960.02"/>
    <property type="gene ID" value="OsLiXu_01g0002960"/>
</dbReference>
<dbReference type="EnsemblPlants" id="OsLiXu_Ung0001270.02">
    <property type="protein sequence ID" value="OsLiXu_Ung0001270.02"/>
    <property type="gene ID" value="OsLiXu_Ung0001270"/>
</dbReference>
<dbReference type="EnsemblPlants" id="OsMH63_01G002980_01">
    <property type="protein sequence ID" value="OsMH63_01G002980_01"/>
    <property type="gene ID" value="OsMH63_01G002980"/>
</dbReference>
<dbReference type="EnsemblPlants" id="OsPr106_01g0002890.01">
    <property type="protein sequence ID" value="OsPr106_01g0002890.01"/>
    <property type="gene ID" value="OsPr106_01g0002890"/>
</dbReference>
<dbReference type="EnsemblPlants" id="OsZS97_01G002850_01">
    <property type="protein sequence ID" value="OsZS97_01G002850_01"/>
    <property type="gene ID" value="OsZS97_01G002850"/>
</dbReference>
<dbReference type="Gramene" id="BGIOSGA002422-TA">
    <property type="protein sequence ID" value="BGIOSGA002422-PA"/>
    <property type="gene ID" value="BGIOSGA002422"/>
</dbReference>
<dbReference type="Gramene" id="OsGoSa_01g0002910.01">
    <property type="protein sequence ID" value="OsGoSa_01g0002910.01"/>
    <property type="gene ID" value="OsGoSa_01g0002910"/>
</dbReference>
<dbReference type="Gramene" id="OsIR64_01g0002810.02">
    <property type="protein sequence ID" value="OsIR64_01g0002810.02"/>
    <property type="gene ID" value="OsIR64_01g0002810"/>
</dbReference>
<dbReference type="Gramene" id="OsKYG_01g0002880.01">
    <property type="protein sequence ID" value="OsKYG_01g0002880.01"/>
    <property type="gene ID" value="OsKYG_01g0002880"/>
</dbReference>
<dbReference type="Gramene" id="OsLiXu_01g0002960.02">
    <property type="protein sequence ID" value="OsLiXu_01g0002960.02"/>
    <property type="gene ID" value="OsLiXu_01g0002960"/>
</dbReference>
<dbReference type="Gramene" id="OsLiXu_Ung0001270.02">
    <property type="protein sequence ID" value="OsLiXu_Ung0001270.02"/>
    <property type="gene ID" value="OsLiXu_Ung0001270"/>
</dbReference>
<dbReference type="Gramene" id="OsMH63_01G002980_01">
    <property type="protein sequence ID" value="OsMH63_01G002980_01"/>
    <property type="gene ID" value="OsMH63_01G002980"/>
</dbReference>
<dbReference type="Gramene" id="OsPr106_01g0002890.01">
    <property type="protein sequence ID" value="OsPr106_01g0002890.01"/>
    <property type="gene ID" value="OsPr106_01g0002890"/>
</dbReference>
<dbReference type="Gramene" id="OsZS97_01G002850_01">
    <property type="protein sequence ID" value="OsZS97_01G002850_01"/>
    <property type="gene ID" value="OsZS97_01G002850"/>
</dbReference>
<dbReference type="HOGENOM" id="CLU_030692_0_0_1"/>
<dbReference type="OMA" id="TIPYQEG"/>
<dbReference type="OrthoDB" id="5738at2759"/>
<dbReference type="Proteomes" id="UP000007015">
    <property type="component" value="Chromosome 1"/>
</dbReference>
<dbReference type="GO" id="GO:0031969">
    <property type="term" value="C:chloroplast membrane"/>
    <property type="evidence" value="ECO:0007669"/>
    <property type="project" value="UniProtKB-SubCell"/>
</dbReference>
<dbReference type="GO" id="GO:0008237">
    <property type="term" value="F:metallopeptidase activity"/>
    <property type="evidence" value="ECO:0007669"/>
    <property type="project" value="UniProtKB-KW"/>
</dbReference>
<dbReference type="GO" id="GO:0006508">
    <property type="term" value="P:proteolysis"/>
    <property type="evidence" value="ECO:0007669"/>
    <property type="project" value="UniProtKB-KW"/>
</dbReference>
<dbReference type="CDD" id="cd06160">
    <property type="entry name" value="S2P-M50_like_2"/>
    <property type="match status" value="1"/>
</dbReference>
<dbReference type="InterPro" id="IPR044838">
    <property type="entry name" value="EGY1-like"/>
</dbReference>
<dbReference type="InterPro" id="IPR008915">
    <property type="entry name" value="Peptidase_M50"/>
</dbReference>
<dbReference type="PANTHER" id="PTHR31412">
    <property type="entry name" value="ZINC METALLOPROTEASE EGY1"/>
    <property type="match status" value="1"/>
</dbReference>
<dbReference type="PANTHER" id="PTHR31412:SF5">
    <property type="entry name" value="ZINC METALLOPROTEASE EGY2, CHLOROPLASTIC-RELATED"/>
    <property type="match status" value="1"/>
</dbReference>
<dbReference type="Pfam" id="PF02163">
    <property type="entry name" value="Peptidase_M50"/>
    <property type="match status" value="1"/>
</dbReference>
<dbReference type="PROSITE" id="PS00142">
    <property type="entry name" value="ZINC_PROTEASE"/>
    <property type="match status" value="1"/>
</dbReference>
<sequence>MQLPAMSCSPSQSSAAAAAAYGCCQRILLASTSLPATGRPARLGLKLRSTHSLQIRNRRFVCQAMTETEPDGDGNGDEEKEELGDDASSPSVYSVTQENGSAESETNADNTKDETVNTEPLSSSDTVQNIDGDATPASDAQENVEVVDVAVGSPLPGMKQQLDESVRIPKATIDILKDQVFGFDTFFVTSQEPYEGGILFKGNLRGQPAKSYEKITNRLQNKFGDQYKLFLLINPEDDKPVAVVVPRQTLQPETTAVPEWFAAASFGVVTIFTLLLRNVPLLQDNLLSTFDNLELLKDGVYGALVTAAIIGVHEIAHILAARDTGIKLAVPYFVPSWQIGSFGAITRIVNIVRNREDLLKVAAAGPLAGFSLGFVLLLLGFILPPSDGLGLVIDPAVFHESFLVGGLAKLILGDALKEGTKLSINPLVLWAWAGLLINAINSIPAGELDGGRIAFAMWGRKISSRISSLAIGLLGISALFNDVAFYWVVLIFFLQRGPISPLSEEITEPENNYISIGVAILLFGLLVCLPYPFPFDPSQLTDFDL</sequence>